<sequence>MLQLLKNGRWNVMTLLITISILIVLAVLLVTIWTTVKAYNVKHTIDPPQENHSDSHNQ</sequence>
<evidence type="ECO:0000255" key="1"/>
<evidence type="ECO:0000305" key="2"/>
<organism>
    <name type="scientific">Bacillus subtilis (strain 168)</name>
    <dbReference type="NCBI Taxonomy" id="224308"/>
    <lineage>
        <taxon>Bacteria</taxon>
        <taxon>Bacillati</taxon>
        <taxon>Bacillota</taxon>
        <taxon>Bacilli</taxon>
        <taxon>Bacillales</taxon>
        <taxon>Bacillaceae</taxon>
        <taxon>Bacillus</taxon>
    </lineage>
</organism>
<proteinExistence type="predicted"/>
<feature type="chain" id="PRO_0000382215" description="Uncharacterized membrane protein YtzI">
    <location>
        <begin position="1"/>
        <end position="58"/>
    </location>
</feature>
<feature type="transmembrane region" description="Helical" evidence="1">
    <location>
        <begin position="12"/>
        <end position="32"/>
    </location>
</feature>
<keyword id="KW-1003">Cell membrane</keyword>
<keyword id="KW-0472">Membrane</keyword>
<keyword id="KW-1185">Reference proteome</keyword>
<keyword id="KW-0812">Transmembrane</keyword>
<keyword id="KW-1133">Transmembrane helix</keyword>
<reference key="1">
    <citation type="journal article" date="1997" name="Nature">
        <title>The complete genome sequence of the Gram-positive bacterium Bacillus subtilis.</title>
        <authorList>
            <person name="Kunst F."/>
            <person name="Ogasawara N."/>
            <person name="Moszer I."/>
            <person name="Albertini A.M."/>
            <person name="Alloni G."/>
            <person name="Azevedo V."/>
            <person name="Bertero M.G."/>
            <person name="Bessieres P."/>
            <person name="Bolotin A."/>
            <person name="Borchert S."/>
            <person name="Borriss R."/>
            <person name="Boursier L."/>
            <person name="Brans A."/>
            <person name="Braun M."/>
            <person name="Brignell S.C."/>
            <person name="Bron S."/>
            <person name="Brouillet S."/>
            <person name="Bruschi C.V."/>
            <person name="Caldwell B."/>
            <person name="Capuano V."/>
            <person name="Carter N.M."/>
            <person name="Choi S.-K."/>
            <person name="Codani J.-J."/>
            <person name="Connerton I.F."/>
            <person name="Cummings N.J."/>
            <person name="Daniel R.A."/>
            <person name="Denizot F."/>
            <person name="Devine K.M."/>
            <person name="Duesterhoeft A."/>
            <person name="Ehrlich S.D."/>
            <person name="Emmerson P.T."/>
            <person name="Entian K.-D."/>
            <person name="Errington J."/>
            <person name="Fabret C."/>
            <person name="Ferrari E."/>
            <person name="Foulger D."/>
            <person name="Fritz C."/>
            <person name="Fujita M."/>
            <person name="Fujita Y."/>
            <person name="Fuma S."/>
            <person name="Galizzi A."/>
            <person name="Galleron N."/>
            <person name="Ghim S.-Y."/>
            <person name="Glaser P."/>
            <person name="Goffeau A."/>
            <person name="Golightly E.J."/>
            <person name="Grandi G."/>
            <person name="Guiseppi G."/>
            <person name="Guy B.J."/>
            <person name="Haga K."/>
            <person name="Haiech J."/>
            <person name="Harwood C.R."/>
            <person name="Henaut A."/>
            <person name="Hilbert H."/>
            <person name="Holsappel S."/>
            <person name="Hosono S."/>
            <person name="Hullo M.-F."/>
            <person name="Itaya M."/>
            <person name="Jones L.-M."/>
            <person name="Joris B."/>
            <person name="Karamata D."/>
            <person name="Kasahara Y."/>
            <person name="Klaerr-Blanchard M."/>
            <person name="Klein C."/>
            <person name="Kobayashi Y."/>
            <person name="Koetter P."/>
            <person name="Koningstein G."/>
            <person name="Krogh S."/>
            <person name="Kumano M."/>
            <person name="Kurita K."/>
            <person name="Lapidus A."/>
            <person name="Lardinois S."/>
            <person name="Lauber J."/>
            <person name="Lazarevic V."/>
            <person name="Lee S.-M."/>
            <person name="Levine A."/>
            <person name="Liu H."/>
            <person name="Masuda S."/>
            <person name="Mauel C."/>
            <person name="Medigue C."/>
            <person name="Medina N."/>
            <person name="Mellado R.P."/>
            <person name="Mizuno M."/>
            <person name="Moestl D."/>
            <person name="Nakai S."/>
            <person name="Noback M."/>
            <person name="Noone D."/>
            <person name="O'Reilly M."/>
            <person name="Ogawa K."/>
            <person name="Ogiwara A."/>
            <person name="Oudega B."/>
            <person name="Park S.-H."/>
            <person name="Parro V."/>
            <person name="Pohl T.M."/>
            <person name="Portetelle D."/>
            <person name="Porwollik S."/>
            <person name="Prescott A.M."/>
            <person name="Presecan E."/>
            <person name="Pujic P."/>
            <person name="Purnelle B."/>
            <person name="Rapoport G."/>
            <person name="Rey M."/>
            <person name="Reynolds S."/>
            <person name="Rieger M."/>
            <person name="Rivolta C."/>
            <person name="Rocha E."/>
            <person name="Roche B."/>
            <person name="Rose M."/>
            <person name="Sadaie Y."/>
            <person name="Sato T."/>
            <person name="Scanlan E."/>
            <person name="Schleich S."/>
            <person name="Schroeter R."/>
            <person name="Scoffone F."/>
            <person name="Sekiguchi J."/>
            <person name="Sekowska A."/>
            <person name="Seror S.J."/>
            <person name="Serror P."/>
            <person name="Shin B.-S."/>
            <person name="Soldo B."/>
            <person name="Sorokin A."/>
            <person name="Tacconi E."/>
            <person name="Takagi T."/>
            <person name="Takahashi H."/>
            <person name="Takemaru K."/>
            <person name="Takeuchi M."/>
            <person name="Tamakoshi A."/>
            <person name="Tanaka T."/>
            <person name="Terpstra P."/>
            <person name="Tognoni A."/>
            <person name="Tosato V."/>
            <person name="Uchiyama S."/>
            <person name="Vandenbol M."/>
            <person name="Vannier F."/>
            <person name="Vassarotti A."/>
            <person name="Viari A."/>
            <person name="Wambutt R."/>
            <person name="Wedler E."/>
            <person name="Wedler H."/>
            <person name="Weitzenegger T."/>
            <person name="Winters P."/>
            <person name="Wipat A."/>
            <person name="Yamamoto H."/>
            <person name="Yamane K."/>
            <person name="Yasumoto K."/>
            <person name="Yata K."/>
            <person name="Yoshida K."/>
            <person name="Yoshikawa H.-F."/>
            <person name="Zumstein E."/>
            <person name="Yoshikawa H."/>
            <person name="Danchin A."/>
        </authorList>
    </citation>
    <scope>NUCLEOTIDE SEQUENCE [LARGE SCALE GENOMIC DNA]</scope>
    <source>
        <strain>168</strain>
    </source>
</reference>
<name>YTZI_BACSU</name>
<gene>
    <name type="primary">ytzI</name>
    <name type="ordered locus">BSU30659</name>
</gene>
<protein>
    <recommendedName>
        <fullName>Uncharacterized membrane protein YtzI</fullName>
    </recommendedName>
</protein>
<comment type="subcellular location">
    <subcellularLocation>
        <location evidence="2">Cell membrane</location>
        <topology evidence="2">Single-pass membrane protein</topology>
    </subcellularLocation>
</comment>
<dbReference type="EMBL" id="AL009126">
    <property type="protein sequence ID" value="CAX52680.1"/>
    <property type="molecule type" value="Genomic_DNA"/>
</dbReference>
<dbReference type="RefSeq" id="WP_010886599.1">
    <property type="nucleotide sequence ID" value="NC_000964.3"/>
</dbReference>
<dbReference type="RefSeq" id="YP_003097774.1">
    <property type="nucleotide sequence ID" value="NC_000964.3"/>
</dbReference>
<dbReference type="SMR" id="C0H3Q1"/>
<dbReference type="FunCoup" id="C0H3Q1">
    <property type="interactions" value="8"/>
</dbReference>
<dbReference type="PaxDb" id="224308-BSU30659"/>
<dbReference type="EnsemblBacteria" id="CAX52680">
    <property type="protein sequence ID" value="CAX52680"/>
    <property type="gene ID" value="BSU_30659"/>
</dbReference>
<dbReference type="GeneID" id="8302972"/>
<dbReference type="KEGG" id="bsu:BSU30659"/>
<dbReference type="PATRIC" id="fig|224308.43.peg.3205"/>
<dbReference type="InParanoid" id="C0H3Q1"/>
<dbReference type="BioCyc" id="BSUB:BSU30659-MONOMER"/>
<dbReference type="Proteomes" id="UP000001570">
    <property type="component" value="Chromosome"/>
</dbReference>
<dbReference type="GO" id="GO:0005886">
    <property type="term" value="C:plasma membrane"/>
    <property type="evidence" value="ECO:0007669"/>
    <property type="project" value="UniProtKB-SubCell"/>
</dbReference>
<dbReference type="InterPro" id="IPR047753">
    <property type="entry name" value="YtzI-like"/>
</dbReference>
<dbReference type="NCBIfam" id="NF033232">
    <property type="entry name" value="small_YtzI"/>
    <property type="match status" value="1"/>
</dbReference>
<accession>C0H3Q1</accession>